<organism>
    <name type="scientific">Psophocarpus tetragonolobus</name>
    <name type="common">Winged bean</name>
    <name type="synonym">Dolichos tetragonolobus</name>
    <dbReference type="NCBI Taxonomy" id="3891"/>
    <lineage>
        <taxon>Eukaryota</taxon>
        <taxon>Viridiplantae</taxon>
        <taxon>Streptophyta</taxon>
        <taxon>Embryophyta</taxon>
        <taxon>Tracheophyta</taxon>
        <taxon>Spermatophyta</taxon>
        <taxon>Magnoliopsida</taxon>
        <taxon>eudicotyledons</taxon>
        <taxon>Gunneridae</taxon>
        <taxon>Pentapetalae</taxon>
        <taxon>rosids</taxon>
        <taxon>fabids</taxon>
        <taxon>Fabales</taxon>
        <taxon>Fabaceae</taxon>
        <taxon>Papilionoideae</taxon>
        <taxon>50 kb inversion clade</taxon>
        <taxon>NPAAA clade</taxon>
        <taxon>indigoferoid/millettioid clade</taxon>
        <taxon>Phaseoleae</taxon>
        <taxon>Psophocarpus</taxon>
    </lineage>
</organism>
<name>IT1A_PSOTE</name>
<keyword id="KW-0903">Direct protein sequencing</keyword>
<keyword id="KW-1015">Disulfide bond</keyword>
<keyword id="KW-0646">Protease inhibitor</keyword>
<keyword id="KW-0722">Serine protease inhibitor</keyword>
<reference key="1">
    <citation type="journal article" date="1983" name="J. Biochem.">
        <title>Amino acid sequences of two trypsin inhibitors from winged bean seeds (Psophocarpus tetragonolobus (L)DC.).</title>
        <authorList>
            <person name="Yamamoto M."/>
            <person name="Hara S."/>
            <person name="Ikenaka T."/>
        </authorList>
    </citation>
    <scope>PROTEIN SEQUENCE</scope>
    <source>
        <tissue>Seed</tissue>
    </source>
</reference>
<proteinExistence type="evidence at protein level"/>
<dbReference type="PIR" id="B01311">
    <property type="entry name" value="TIWDK"/>
</dbReference>
<dbReference type="SMR" id="P10821"/>
<dbReference type="GO" id="GO:0004867">
    <property type="term" value="F:serine-type endopeptidase inhibitor activity"/>
    <property type="evidence" value="ECO:0007669"/>
    <property type="project" value="UniProtKB-KW"/>
</dbReference>
<dbReference type="CDD" id="cd23362">
    <property type="entry name" value="beta-trefoil_STI_WCI3-like"/>
    <property type="match status" value="1"/>
</dbReference>
<dbReference type="Gene3D" id="2.80.10.50">
    <property type="match status" value="1"/>
</dbReference>
<dbReference type="InterPro" id="IPR011065">
    <property type="entry name" value="Kunitz_inhibitor_STI-like_sf"/>
</dbReference>
<dbReference type="InterPro" id="IPR002160">
    <property type="entry name" value="Prot_inh_Kunz-lg"/>
</dbReference>
<dbReference type="PANTHER" id="PTHR33107">
    <property type="entry name" value="KUNITZ TRYPSIN INHIBITOR 2"/>
    <property type="match status" value="1"/>
</dbReference>
<dbReference type="PANTHER" id="PTHR33107:SF81">
    <property type="entry name" value="TRYPSIN INHIBITOR A"/>
    <property type="match status" value="1"/>
</dbReference>
<dbReference type="Pfam" id="PF00197">
    <property type="entry name" value="Kunitz_legume"/>
    <property type="match status" value="1"/>
</dbReference>
<dbReference type="PRINTS" id="PR00291">
    <property type="entry name" value="KUNITZINHBTR"/>
</dbReference>
<dbReference type="SMART" id="SM00452">
    <property type="entry name" value="STI"/>
    <property type="match status" value="1"/>
</dbReference>
<dbReference type="SUPFAM" id="SSF50386">
    <property type="entry name" value="STI-like"/>
    <property type="match status" value="1"/>
</dbReference>
<dbReference type="PROSITE" id="PS00283">
    <property type="entry name" value="SOYBEAN_KUNITZ"/>
    <property type="match status" value="1"/>
</dbReference>
<evidence type="ECO:0000250" key="1"/>
<evidence type="ECO:0000305" key="2"/>
<sequence length="172" mass="19261">EPLLDSEGELVRNGGTYYLLPDRWALGGGIEAAATGTETCPLTVVRSPNEVSVGEPLRISSQLRSGFIPDYSVVRIGFANPPKCAPSPWWTVVEDQPQQPSVKLSELKSTKFDYLFKFEKVTSKFSSYKLKYCAKRDTCKDIGIYRDQKGYERLVVTDENPLVVIFKKVESS</sequence>
<protein>
    <recommendedName>
        <fullName>Trypsin inhibitor 1A</fullName>
    </recommendedName>
    <alternativeName>
        <fullName>WTI-1A</fullName>
    </alternativeName>
</protein>
<comment type="function">
    <text>WTI-1B inhibits trypsin stoichiometrically.</text>
</comment>
<comment type="similarity">
    <text evidence="2">Belongs to the protease inhibitor I3 (leguminous Kunitz-type inhibitor) family.</text>
</comment>
<feature type="chain" id="PRO_0000083302" description="Trypsin inhibitor 1A">
    <location>
        <begin position="1"/>
        <end position="172"/>
    </location>
</feature>
<feature type="site" description="Reactive bond for trypsin">
    <location>
        <begin position="64"/>
        <end position="65"/>
    </location>
</feature>
<feature type="disulfide bond" evidence="1">
    <location>
        <begin position="40"/>
        <end position="84"/>
    </location>
</feature>
<feature type="disulfide bond" evidence="1">
    <location>
        <begin position="133"/>
        <end position="139"/>
    </location>
</feature>
<accession>P10821</accession>
<accession>P01072</accession>